<evidence type="ECO:0000255" key="1">
    <source>
        <dbReference type="HAMAP-Rule" id="MF_00438"/>
    </source>
</evidence>
<name>PSBM_LIRTU</name>
<gene>
    <name evidence="1" type="primary">psbM</name>
</gene>
<accession>Q0G9M5</accession>
<sequence length="34" mass="3783">MEVNILAFIATALFILVPTAFLLIIYVKTVSQND</sequence>
<reference key="1">
    <citation type="journal article" date="2006" name="BMC Evol. Biol.">
        <title>Complete plastid genome sequences of Drimys, Liriodendron, and Piper: implications for the phylogenetic relationships of magnoliids.</title>
        <authorList>
            <person name="Cai Z."/>
            <person name="Penaflor C."/>
            <person name="Kuehl J.V."/>
            <person name="Leebens-Mack J."/>
            <person name="Carlson J.E."/>
            <person name="dePamphilis C.W."/>
            <person name="Boore J.L."/>
            <person name="Jansen R.K."/>
        </authorList>
    </citation>
    <scope>NUCLEOTIDE SEQUENCE [LARGE SCALE GENOMIC DNA]</scope>
</reference>
<geneLocation type="chloroplast"/>
<protein>
    <recommendedName>
        <fullName evidence="1">Photosystem II reaction center protein M</fullName>
        <shortName evidence="1">PSII-M</shortName>
    </recommendedName>
</protein>
<proteinExistence type="inferred from homology"/>
<organism>
    <name type="scientific">Liriodendron tulipifera</name>
    <name type="common">Tuliptree</name>
    <name type="synonym">Tulip poplar</name>
    <dbReference type="NCBI Taxonomy" id="3415"/>
    <lineage>
        <taxon>Eukaryota</taxon>
        <taxon>Viridiplantae</taxon>
        <taxon>Streptophyta</taxon>
        <taxon>Embryophyta</taxon>
        <taxon>Tracheophyta</taxon>
        <taxon>Spermatophyta</taxon>
        <taxon>Magnoliopsida</taxon>
        <taxon>Magnoliidae</taxon>
        <taxon>Magnoliales</taxon>
        <taxon>Magnoliaceae</taxon>
        <taxon>Liriodendron</taxon>
    </lineage>
</organism>
<dbReference type="EMBL" id="DQ899947">
    <property type="protein sequence ID" value="ABI32503.1"/>
    <property type="molecule type" value="Genomic_DNA"/>
</dbReference>
<dbReference type="RefSeq" id="YP_740196.1">
    <property type="nucleotide sequence ID" value="NC_008326.1"/>
</dbReference>
<dbReference type="SMR" id="Q0G9M5"/>
<dbReference type="GeneID" id="4266605"/>
<dbReference type="GO" id="GO:0009535">
    <property type="term" value="C:chloroplast thylakoid membrane"/>
    <property type="evidence" value="ECO:0007669"/>
    <property type="project" value="UniProtKB-SubCell"/>
</dbReference>
<dbReference type="GO" id="GO:0009523">
    <property type="term" value="C:photosystem II"/>
    <property type="evidence" value="ECO:0007669"/>
    <property type="project" value="UniProtKB-KW"/>
</dbReference>
<dbReference type="GO" id="GO:0019684">
    <property type="term" value="P:photosynthesis, light reaction"/>
    <property type="evidence" value="ECO:0007669"/>
    <property type="project" value="InterPro"/>
</dbReference>
<dbReference type="HAMAP" id="MF_00438">
    <property type="entry name" value="PSII_PsbM"/>
    <property type="match status" value="1"/>
</dbReference>
<dbReference type="InterPro" id="IPR007826">
    <property type="entry name" value="PSII_PsbM"/>
</dbReference>
<dbReference type="InterPro" id="IPR037269">
    <property type="entry name" value="PSII_PsbM_sf"/>
</dbReference>
<dbReference type="NCBIfam" id="TIGR03038">
    <property type="entry name" value="PS_II_psbM"/>
    <property type="match status" value="1"/>
</dbReference>
<dbReference type="PANTHER" id="PTHR35774">
    <property type="entry name" value="PHOTOSYSTEM II REACTION CENTER PROTEIN M"/>
    <property type="match status" value="1"/>
</dbReference>
<dbReference type="PANTHER" id="PTHR35774:SF1">
    <property type="entry name" value="PHOTOSYSTEM II REACTION CENTER PROTEIN M"/>
    <property type="match status" value="1"/>
</dbReference>
<dbReference type="Pfam" id="PF05151">
    <property type="entry name" value="PsbM"/>
    <property type="match status" value="1"/>
</dbReference>
<dbReference type="SUPFAM" id="SSF161033">
    <property type="entry name" value="Photosystem II reaction center protein M, PsbM"/>
    <property type="match status" value="1"/>
</dbReference>
<keyword id="KW-0150">Chloroplast</keyword>
<keyword id="KW-0472">Membrane</keyword>
<keyword id="KW-0602">Photosynthesis</keyword>
<keyword id="KW-0604">Photosystem II</keyword>
<keyword id="KW-0934">Plastid</keyword>
<keyword id="KW-0674">Reaction center</keyword>
<keyword id="KW-0793">Thylakoid</keyword>
<keyword id="KW-0812">Transmembrane</keyword>
<keyword id="KW-1133">Transmembrane helix</keyword>
<comment type="function">
    <text evidence="1">One of the components of the core complex of photosystem II (PSII). PSII is a light-driven water:plastoquinone oxidoreductase that uses light energy to abstract electrons from H(2)O, generating O(2) and a proton gradient subsequently used for ATP formation. It consists of a core antenna complex that captures photons, and an electron transfer chain that converts photonic excitation into a charge separation. This subunit is found at the monomer-monomer interface.</text>
</comment>
<comment type="subunit">
    <text evidence="1">PSII is composed of 1 copy each of membrane proteins PsbA, PsbB, PsbC, PsbD, PsbE, PsbF, PsbH, PsbI, PsbJ, PsbK, PsbL, PsbM, PsbT, PsbX, PsbY, PsbZ, Psb30/Ycf12, at least 3 peripheral proteins of the oxygen-evolving complex and a large number of cofactors. It forms dimeric complexes.</text>
</comment>
<comment type="subcellular location">
    <subcellularLocation>
        <location evidence="1">Plastid</location>
        <location evidence="1">Chloroplast thylakoid membrane</location>
        <topology evidence="1">Single-pass membrane protein</topology>
    </subcellularLocation>
</comment>
<comment type="similarity">
    <text evidence="1">Belongs to the PsbM family.</text>
</comment>
<feature type="chain" id="PRO_0000276244" description="Photosystem II reaction center protein M">
    <location>
        <begin position="1"/>
        <end position="34"/>
    </location>
</feature>
<feature type="transmembrane region" description="Helical" evidence="1">
    <location>
        <begin position="5"/>
        <end position="25"/>
    </location>
</feature>